<evidence type="ECO:0000255" key="1"/>
<evidence type="ECO:0000255" key="2">
    <source>
        <dbReference type="PROSITE-ProRule" id="PRU00498"/>
    </source>
</evidence>
<evidence type="ECO:0000269" key="3">
    <source>
    </source>
</evidence>
<evidence type="ECO:0000303" key="4">
    <source>
    </source>
</evidence>
<evidence type="ECO:0000305" key="5"/>
<evidence type="ECO:0000305" key="6">
    <source>
    </source>
</evidence>
<feature type="chain" id="PRO_0000450428" description="Acurin A biosynthesis cluster MFS-type transporter">
    <location>
        <begin position="1"/>
        <end position="554"/>
    </location>
</feature>
<feature type="transmembrane region" description="Helical" evidence="1">
    <location>
        <begin position="24"/>
        <end position="44"/>
    </location>
</feature>
<feature type="transmembrane region" description="Helical" evidence="1">
    <location>
        <begin position="60"/>
        <end position="80"/>
    </location>
</feature>
<feature type="transmembrane region" description="Helical" evidence="1">
    <location>
        <begin position="96"/>
        <end position="116"/>
    </location>
</feature>
<feature type="transmembrane region" description="Helical" evidence="1">
    <location>
        <begin position="123"/>
        <end position="143"/>
    </location>
</feature>
<feature type="transmembrane region" description="Helical" evidence="1">
    <location>
        <begin position="151"/>
        <end position="171"/>
    </location>
</feature>
<feature type="transmembrane region" description="Helical" evidence="1">
    <location>
        <begin position="179"/>
        <end position="199"/>
    </location>
</feature>
<feature type="transmembrane region" description="Helical" evidence="1">
    <location>
        <begin position="219"/>
        <end position="239"/>
    </location>
</feature>
<feature type="transmembrane region" description="Helical" evidence="1">
    <location>
        <begin position="251"/>
        <end position="271"/>
    </location>
</feature>
<feature type="transmembrane region" description="Helical" evidence="1">
    <location>
        <begin position="289"/>
        <end position="309"/>
    </location>
</feature>
<feature type="transmembrane region" description="Helical" evidence="1">
    <location>
        <begin position="324"/>
        <end position="344"/>
    </location>
</feature>
<feature type="transmembrane region" description="Helical" evidence="1">
    <location>
        <begin position="352"/>
        <end position="372"/>
    </location>
</feature>
<feature type="transmembrane region" description="Helical" evidence="1">
    <location>
        <begin position="385"/>
        <end position="405"/>
    </location>
</feature>
<feature type="transmembrane region" description="Helical" evidence="1">
    <location>
        <begin position="417"/>
        <end position="437"/>
    </location>
</feature>
<feature type="transmembrane region" description="Helical" evidence="1">
    <location>
        <begin position="496"/>
        <end position="516"/>
    </location>
</feature>
<feature type="glycosylation site" description="N-linked (GlcNAc...) asparagine" evidence="2">
    <location>
        <position position="174"/>
    </location>
</feature>
<feature type="glycosylation site" description="N-linked (GlcNAc...) asparagine" evidence="2">
    <location>
        <position position="283"/>
    </location>
</feature>
<proteinExistence type="evidence at transcript level"/>
<reference key="1">
    <citation type="journal article" date="2017" name="Genome Biol.">
        <title>Comparative genomics reveals high biological diversity and specific adaptations in the industrially and medically important fungal genus Aspergillus.</title>
        <authorList>
            <person name="de Vries R.P."/>
            <person name="Riley R."/>
            <person name="Wiebenga A."/>
            <person name="Aguilar-Osorio G."/>
            <person name="Amillis S."/>
            <person name="Uchima C.A."/>
            <person name="Anderluh G."/>
            <person name="Asadollahi M."/>
            <person name="Askin M."/>
            <person name="Barry K."/>
            <person name="Battaglia E."/>
            <person name="Bayram O."/>
            <person name="Benocci T."/>
            <person name="Braus-Stromeyer S.A."/>
            <person name="Caldana C."/>
            <person name="Canovas D."/>
            <person name="Cerqueira G.C."/>
            <person name="Chen F."/>
            <person name="Chen W."/>
            <person name="Choi C."/>
            <person name="Clum A."/>
            <person name="Dos Santos R.A."/>
            <person name="Damasio A.R."/>
            <person name="Diallinas G."/>
            <person name="Emri T."/>
            <person name="Fekete E."/>
            <person name="Flipphi M."/>
            <person name="Freyberg S."/>
            <person name="Gallo A."/>
            <person name="Gournas C."/>
            <person name="Habgood R."/>
            <person name="Hainaut M."/>
            <person name="Harispe M.L."/>
            <person name="Henrissat B."/>
            <person name="Hilden K.S."/>
            <person name="Hope R."/>
            <person name="Hossain A."/>
            <person name="Karabika E."/>
            <person name="Karaffa L."/>
            <person name="Karanyi Z."/>
            <person name="Krasevec N."/>
            <person name="Kuo A."/>
            <person name="Kusch H."/>
            <person name="LaButti K."/>
            <person name="Lagendijk E.L."/>
            <person name="Lapidus A."/>
            <person name="Levasseur A."/>
            <person name="Lindquist E."/>
            <person name="Lipzen A."/>
            <person name="Logrieco A.F."/>
            <person name="MacCabe A."/>
            <person name="Maekelae M.R."/>
            <person name="Malavazi I."/>
            <person name="Melin P."/>
            <person name="Meyer V."/>
            <person name="Mielnichuk N."/>
            <person name="Miskei M."/>
            <person name="Molnar A.P."/>
            <person name="Mule G."/>
            <person name="Ngan C.Y."/>
            <person name="Orejas M."/>
            <person name="Orosz E."/>
            <person name="Ouedraogo J.P."/>
            <person name="Overkamp K.M."/>
            <person name="Park H.-S."/>
            <person name="Perrone G."/>
            <person name="Piumi F."/>
            <person name="Punt P.J."/>
            <person name="Ram A.F."/>
            <person name="Ramon A."/>
            <person name="Rauscher S."/>
            <person name="Record E."/>
            <person name="Riano-Pachon D.M."/>
            <person name="Robert V."/>
            <person name="Roehrig J."/>
            <person name="Ruller R."/>
            <person name="Salamov A."/>
            <person name="Salih N.S."/>
            <person name="Samson R.A."/>
            <person name="Sandor E."/>
            <person name="Sanguinetti M."/>
            <person name="Schuetze T."/>
            <person name="Sepcic K."/>
            <person name="Shelest E."/>
            <person name="Sherlock G."/>
            <person name="Sophianopoulou V."/>
            <person name="Squina F.M."/>
            <person name="Sun H."/>
            <person name="Susca A."/>
            <person name="Todd R.B."/>
            <person name="Tsang A."/>
            <person name="Unkles S.E."/>
            <person name="van de Wiele N."/>
            <person name="van Rossen-Uffink D."/>
            <person name="Oliveira J.V."/>
            <person name="Vesth T.C."/>
            <person name="Visser J."/>
            <person name="Yu J.-H."/>
            <person name="Zhou M."/>
            <person name="Andersen M.R."/>
            <person name="Archer D.B."/>
            <person name="Baker S.E."/>
            <person name="Benoit I."/>
            <person name="Brakhage A.A."/>
            <person name="Braus G.H."/>
            <person name="Fischer R."/>
            <person name="Frisvad J.C."/>
            <person name="Goldman G.H."/>
            <person name="Houbraken J."/>
            <person name="Oakley B."/>
            <person name="Pocsi I."/>
            <person name="Scazzocchio C."/>
            <person name="Seiboth B."/>
            <person name="vanKuyk P.A."/>
            <person name="Wortman J."/>
            <person name="Dyer P.S."/>
            <person name="Grigoriev I.V."/>
        </authorList>
    </citation>
    <scope>NUCLEOTIDE SEQUENCE [LARGE SCALE GENOMIC DNA]</scope>
    <source>
        <strain>ATCC 16872 / CBS 172.66 / WB 5094</strain>
    </source>
</reference>
<reference key="2">
    <citation type="journal article" date="2020" name="Fungal Genet. Biol.">
        <title>Acurin A, a novel hybrid compound, biosynthesized by individually translated PKS- and NRPS-encoding genes in Aspergillus aculeatus.</title>
        <authorList>
            <person name="Wolff P.B."/>
            <person name="Nielsen M.L."/>
            <person name="Slot J.C."/>
            <person name="Andersen L.N."/>
            <person name="Petersen L.M."/>
            <person name="Isbrandt T."/>
            <person name="Holm D.K."/>
            <person name="Mortensen U.H."/>
            <person name="Noedvig C.S."/>
            <person name="Larsen T.O."/>
            <person name="Hoof J.B."/>
        </authorList>
    </citation>
    <scope>FUNCTION</scope>
    <scope>DISRUPTION PHENOTYPE</scope>
    <scope>INDUCTION</scope>
</reference>
<protein>
    <recommendedName>
        <fullName evidence="4">Acurin A biosynthesis cluster MFS-type transporter</fullName>
    </recommendedName>
</protein>
<keyword id="KW-0325">Glycoprotein</keyword>
<keyword id="KW-0472">Membrane</keyword>
<keyword id="KW-1185">Reference proteome</keyword>
<keyword id="KW-0812">Transmembrane</keyword>
<keyword id="KW-1133">Transmembrane helix</keyword>
<keyword id="KW-0813">Transport</keyword>
<name>ACRT_ASPA1</name>
<accession>A0A1L9WQV4</accession>
<sequence>MADHGEHGVPEQQNAPPKKGLRFWLIFLAIGIATFVAALDTSIISTALPTITADLGSEELYIWIINTYLLSSTVSSAIVGQLSNIFGRRSMTTLALLIFAVGSAISGAARDTGMLLAGRTIQGLGGGSITTLSEVLVCDMVSLRERGVYAGILGAAWTLAAVVGPIMGGGFTQNVSWRWIFYINLPIAGSSLFLIVTLLRVRNPRSDTSILRRLRTIDWGGITLLTLGVTAILLSLTWAGTTHPWSSWRTIVPLILGFLGLLGFIAYEALPPEPTMPLRLFRNRTAATLFVMAFIYSLLLFWVCYFLPIYFQAVLNATPTRSAVMLFPVATTTAPAGIVAGILMTKTGRYRSFQYIGFALMTIACGLFTLLDQSTTTGEWTGYQILFGVGTGIVFTTGLPPILASLPESDVATGTATWIFMRNFGAIWGTAIPAAVFNTKANALASQTIDDPTVRGLLVNGGAYERATKAFVSSFKSRPAVMRAIRRLYVVSLREVWQVSIAFCGVGFLLCFLVKAYRLREELNTEYGMQLWRPVFKRLVCTWYLAGSANLMCT</sequence>
<gene>
    <name type="ORF">ASPACDRAFT_1881869</name>
</gene>
<comment type="function">
    <text evidence="6">MFS-type transporter that may have a role in the biosynthesis of acurin A, a highly reduced polyketide coupled to a serine via a peptide bond; either in extra- or intracellular transport.</text>
</comment>
<comment type="subcellular location">
    <subcellularLocation>
        <location evidence="1">Membrane</location>
        <topology evidence="1">Multi-pass membrane protein</topology>
    </subcellularLocation>
</comment>
<comment type="induction">
    <text evidence="3">Expression is positively regulated by the acurin A cluster-specific transcription regulator acrR.</text>
</comment>
<comment type="disruption phenotype">
    <text evidence="3">Does not affect the production of acurin A.</text>
</comment>
<comment type="similarity">
    <text evidence="5">Belongs to the major facilitator superfamily.</text>
</comment>
<organism>
    <name type="scientific">Aspergillus aculeatus (strain ATCC 16872 / CBS 172.66 / WB 5094)</name>
    <dbReference type="NCBI Taxonomy" id="690307"/>
    <lineage>
        <taxon>Eukaryota</taxon>
        <taxon>Fungi</taxon>
        <taxon>Dikarya</taxon>
        <taxon>Ascomycota</taxon>
        <taxon>Pezizomycotina</taxon>
        <taxon>Eurotiomycetes</taxon>
        <taxon>Eurotiomycetidae</taxon>
        <taxon>Eurotiales</taxon>
        <taxon>Aspergillaceae</taxon>
        <taxon>Aspergillus</taxon>
        <taxon>Aspergillus subgen. Circumdati</taxon>
    </lineage>
</organism>
<dbReference type="EMBL" id="KV878980">
    <property type="protein sequence ID" value="OJJ98488.1"/>
    <property type="molecule type" value="Genomic_DNA"/>
</dbReference>
<dbReference type="RefSeq" id="XP_020054828.1">
    <property type="nucleotide sequence ID" value="XM_020198265.1"/>
</dbReference>
<dbReference type="SMR" id="A0A1L9WQV4"/>
<dbReference type="GeneID" id="30972079"/>
<dbReference type="VEuPathDB" id="FungiDB:ASPACDRAFT_1881869"/>
<dbReference type="OMA" id="DQLFWPN"/>
<dbReference type="OrthoDB" id="10021397at2759"/>
<dbReference type="Proteomes" id="UP000184546">
    <property type="component" value="Unassembled WGS sequence"/>
</dbReference>
<dbReference type="GO" id="GO:0005886">
    <property type="term" value="C:plasma membrane"/>
    <property type="evidence" value="ECO:0007669"/>
    <property type="project" value="TreeGrafter"/>
</dbReference>
<dbReference type="GO" id="GO:0022857">
    <property type="term" value="F:transmembrane transporter activity"/>
    <property type="evidence" value="ECO:0007669"/>
    <property type="project" value="InterPro"/>
</dbReference>
<dbReference type="CDD" id="cd17502">
    <property type="entry name" value="MFS_Azr1_MDR_like"/>
    <property type="match status" value="1"/>
</dbReference>
<dbReference type="FunFam" id="1.20.1250.20:FF:000484">
    <property type="entry name" value="MFS general substrate transporter"/>
    <property type="match status" value="1"/>
</dbReference>
<dbReference type="Gene3D" id="1.20.1250.20">
    <property type="entry name" value="MFS general substrate transporter like domains"/>
    <property type="match status" value="1"/>
</dbReference>
<dbReference type="Gene3D" id="1.20.1720.10">
    <property type="entry name" value="Multidrug resistance protein D"/>
    <property type="match status" value="1"/>
</dbReference>
<dbReference type="InterPro" id="IPR011701">
    <property type="entry name" value="MFS"/>
</dbReference>
<dbReference type="InterPro" id="IPR020846">
    <property type="entry name" value="MFS_dom"/>
</dbReference>
<dbReference type="InterPro" id="IPR036259">
    <property type="entry name" value="MFS_trans_sf"/>
</dbReference>
<dbReference type="PANTHER" id="PTHR23501">
    <property type="entry name" value="MAJOR FACILITATOR SUPERFAMILY"/>
    <property type="match status" value="1"/>
</dbReference>
<dbReference type="PANTHER" id="PTHR23501:SF187">
    <property type="entry name" value="MAJOR FACILITATOR SUPERFAMILY (MFS) PROFILE DOMAIN-CONTAINING PROTEIN"/>
    <property type="match status" value="1"/>
</dbReference>
<dbReference type="Pfam" id="PF07690">
    <property type="entry name" value="MFS_1"/>
    <property type="match status" value="1"/>
</dbReference>
<dbReference type="PRINTS" id="PR01036">
    <property type="entry name" value="TCRTETB"/>
</dbReference>
<dbReference type="SUPFAM" id="SSF103473">
    <property type="entry name" value="MFS general substrate transporter"/>
    <property type="match status" value="1"/>
</dbReference>
<dbReference type="PROSITE" id="PS50850">
    <property type="entry name" value="MFS"/>
    <property type="match status" value="1"/>
</dbReference>